<feature type="chain" id="PRO_0000347297" description="Unknown protein 10">
    <location>
        <begin position="1" status="less than"/>
        <end position="22" status="greater than"/>
    </location>
</feature>
<feature type="non-consecutive residues" evidence="1">
    <location>
        <begin position="11"/>
        <end position="12"/>
    </location>
</feature>
<feature type="non-terminal residue" evidence="1">
    <location>
        <position position="1"/>
    </location>
</feature>
<feature type="non-terminal residue" evidence="1">
    <location>
        <position position="22"/>
    </location>
</feature>
<sequence length="22" mass="2329">ARTGFGVLKPAMQGYPGLVLPR</sequence>
<reference key="1">
    <citation type="journal article" date="2008" name="J. Proteomics">
        <title>A proteomics approach to identify proteins differentially expressed in Douglas-fir seedlings infected by Phellinus sulphurascens.</title>
        <authorList>
            <person name="Islam M.A."/>
            <person name="Sturrock R.N."/>
            <person name="Ekramoddoullah A.K.M."/>
        </authorList>
    </citation>
    <scope>IDENTIFICATION BY MASS SPECTROMETRY</scope>
</reference>
<name>UP10_PSEMZ</name>
<accession>P85907</accession>
<proteinExistence type="evidence at protein level"/>
<organism>
    <name type="scientific">Pseudotsuga menziesii</name>
    <name type="common">Douglas-fir</name>
    <name type="synonym">Abies menziesii</name>
    <dbReference type="NCBI Taxonomy" id="3357"/>
    <lineage>
        <taxon>Eukaryota</taxon>
        <taxon>Viridiplantae</taxon>
        <taxon>Streptophyta</taxon>
        <taxon>Embryophyta</taxon>
        <taxon>Tracheophyta</taxon>
        <taxon>Spermatophyta</taxon>
        <taxon>Pinopsida</taxon>
        <taxon>Pinidae</taxon>
        <taxon>Conifers I</taxon>
        <taxon>Pinales</taxon>
        <taxon>Pinaceae</taxon>
        <taxon>Pseudotsuga</taxon>
    </lineage>
</organism>
<evidence type="ECO:0000303" key="1">
    <source>
    </source>
</evidence>
<protein>
    <recommendedName>
        <fullName>Unknown protein 10</fullName>
    </recommendedName>
</protein>